<sequence>MSNTPIELKGSSFTLSVVHLHEAEPKVIHQALKDKIAQAPTFLKHAPVVLNVSALEDPVNWSAMHKAVSATGLRVIGVSGCKDAQLKAEIEKMGLPILTEGKEKAPRPAPAPQAPAQNTMPVTKTRLIDTPVRSGQRIYAPQCDLIVTSHVSAGAELIADGNIHVYGMMRGRALAGASGDRETQIFCTNLMAELVSIAGEYWLSDQIPAEFYGKAARLQLVENALTVQPLN</sequence>
<name>MINC_SHIFL</name>
<gene>
    <name evidence="1" type="primary">minC</name>
    <name type="ordered locus">SF1163</name>
    <name type="ordered locus">S1249</name>
</gene>
<reference key="1">
    <citation type="journal article" date="2002" name="Nucleic Acids Res.">
        <title>Genome sequence of Shigella flexneri 2a: insights into pathogenicity through comparison with genomes of Escherichia coli K12 and O157.</title>
        <authorList>
            <person name="Jin Q."/>
            <person name="Yuan Z."/>
            <person name="Xu J."/>
            <person name="Wang Y."/>
            <person name="Shen Y."/>
            <person name="Lu W."/>
            <person name="Wang J."/>
            <person name="Liu H."/>
            <person name="Yang J."/>
            <person name="Yang F."/>
            <person name="Zhang X."/>
            <person name="Zhang J."/>
            <person name="Yang G."/>
            <person name="Wu H."/>
            <person name="Qu D."/>
            <person name="Dong J."/>
            <person name="Sun L."/>
            <person name="Xue Y."/>
            <person name="Zhao A."/>
            <person name="Gao Y."/>
            <person name="Zhu J."/>
            <person name="Kan B."/>
            <person name="Ding K."/>
            <person name="Chen S."/>
            <person name="Cheng H."/>
            <person name="Yao Z."/>
            <person name="He B."/>
            <person name="Chen R."/>
            <person name="Ma D."/>
            <person name="Qiang B."/>
            <person name="Wen Y."/>
            <person name="Hou Y."/>
            <person name="Yu J."/>
        </authorList>
    </citation>
    <scope>NUCLEOTIDE SEQUENCE [LARGE SCALE GENOMIC DNA]</scope>
    <source>
        <strain>301 / Serotype 2a</strain>
    </source>
</reference>
<reference key="2">
    <citation type="journal article" date="2003" name="Infect. Immun.">
        <title>Complete genome sequence and comparative genomics of Shigella flexneri serotype 2a strain 2457T.</title>
        <authorList>
            <person name="Wei J."/>
            <person name="Goldberg M.B."/>
            <person name="Burland V."/>
            <person name="Venkatesan M.M."/>
            <person name="Deng W."/>
            <person name="Fournier G."/>
            <person name="Mayhew G.F."/>
            <person name="Plunkett G. III"/>
            <person name="Rose D.J."/>
            <person name="Darling A."/>
            <person name="Mau B."/>
            <person name="Perna N.T."/>
            <person name="Payne S.M."/>
            <person name="Runyen-Janecky L.J."/>
            <person name="Zhou S."/>
            <person name="Schwartz D.C."/>
            <person name="Blattner F.R."/>
        </authorList>
    </citation>
    <scope>NUCLEOTIDE SEQUENCE [LARGE SCALE GENOMIC DNA]</scope>
    <source>
        <strain>ATCC 700930 / 2457T / Serotype 2a</strain>
    </source>
</reference>
<keyword id="KW-0131">Cell cycle</keyword>
<keyword id="KW-0132">Cell division</keyword>
<keyword id="KW-1185">Reference proteome</keyword>
<keyword id="KW-0717">Septation</keyword>
<organism>
    <name type="scientific">Shigella flexneri</name>
    <dbReference type="NCBI Taxonomy" id="623"/>
    <lineage>
        <taxon>Bacteria</taxon>
        <taxon>Pseudomonadati</taxon>
        <taxon>Pseudomonadota</taxon>
        <taxon>Gammaproteobacteria</taxon>
        <taxon>Enterobacterales</taxon>
        <taxon>Enterobacteriaceae</taxon>
        <taxon>Shigella</taxon>
    </lineage>
</organism>
<evidence type="ECO:0000255" key="1">
    <source>
        <dbReference type="HAMAP-Rule" id="MF_00267"/>
    </source>
</evidence>
<protein>
    <recommendedName>
        <fullName>Septum site-determining protein MinC</fullName>
    </recommendedName>
</protein>
<proteinExistence type="inferred from homology"/>
<dbReference type="EMBL" id="AE005674">
    <property type="protein sequence ID" value="AAN42779.2"/>
    <property type="molecule type" value="Genomic_DNA"/>
</dbReference>
<dbReference type="EMBL" id="AE014073">
    <property type="protein sequence ID" value="AAP16671.1"/>
    <property type="molecule type" value="Genomic_DNA"/>
</dbReference>
<dbReference type="RefSeq" id="NP_707072.2">
    <property type="nucleotide sequence ID" value="NC_004337.2"/>
</dbReference>
<dbReference type="RefSeq" id="WP_005047937.1">
    <property type="nucleotide sequence ID" value="NZ_WPGW01000222.1"/>
</dbReference>
<dbReference type="SMR" id="Q7UCU1"/>
<dbReference type="STRING" id="198214.SF1163"/>
<dbReference type="PaxDb" id="198214-SF1163"/>
<dbReference type="GeneID" id="1024130"/>
<dbReference type="KEGG" id="sfl:SF1163"/>
<dbReference type="KEGG" id="sfx:S1249"/>
<dbReference type="PATRIC" id="fig|198214.7.peg.1373"/>
<dbReference type="HOGENOM" id="CLU_067812_0_1_6"/>
<dbReference type="Proteomes" id="UP000001006">
    <property type="component" value="Chromosome"/>
</dbReference>
<dbReference type="Proteomes" id="UP000002673">
    <property type="component" value="Chromosome"/>
</dbReference>
<dbReference type="GO" id="GO:0000902">
    <property type="term" value="P:cell morphogenesis"/>
    <property type="evidence" value="ECO:0007669"/>
    <property type="project" value="InterPro"/>
</dbReference>
<dbReference type="GO" id="GO:0000917">
    <property type="term" value="P:division septum assembly"/>
    <property type="evidence" value="ECO:0007669"/>
    <property type="project" value="UniProtKB-KW"/>
</dbReference>
<dbReference type="GO" id="GO:0051302">
    <property type="term" value="P:regulation of cell division"/>
    <property type="evidence" value="ECO:0007669"/>
    <property type="project" value="InterPro"/>
</dbReference>
<dbReference type="GO" id="GO:1901891">
    <property type="term" value="P:regulation of cell septum assembly"/>
    <property type="evidence" value="ECO:0007669"/>
    <property type="project" value="InterPro"/>
</dbReference>
<dbReference type="FunFam" id="2.160.20.70:FF:000002">
    <property type="entry name" value="Probable septum site-determining protein MinC"/>
    <property type="match status" value="1"/>
</dbReference>
<dbReference type="Gene3D" id="2.160.20.70">
    <property type="match status" value="1"/>
</dbReference>
<dbReference type="Gene3D" id="3.30.70.260">
    <property type="match status" value="1"/>
</dbReference>
<dbReference type="HAMAP" id="MF_00267">
    <property type="entry name" value="MinC"/>
    <property type="match status" value="1"/>
</dbReference>
<dbReference type="InterPro" id="IPR016098">
    <property type="entry name" value="CAP/MinC_C"/>
</dbReference>
<dbReference type="InterPro" id="IPR013033">
    <property type="entry name" value="MinC"/>
</dbReference>
<dbReference type="InterPro" id="IPR036145">
    <property type="entry name" value="MinC_C_sf"/>
</dbReference>
<dbReference type="InterPro" id="IPR007874">
    <property type="entry name" value="MinC_N"/>
</dbReference>
<dbReference type="InterPro" id="IPR005526">
    <property type="entry name" value="Septum_form_inhib_MinC_C"/>
</dbReference>
<dbReference type="NCBIfam" id="TIGR01222">
    <property type="entry name" value="minC"/>
    <property type="match status" value="1"/>
</dbReference>
<dbReference type="PANTHER" id="PTHR34108">
    <property type="entry name" value="SEPTUM SITE-DETERMINING PROTEIN MINC"/>
    <property type="match status" value="1"/>
</dbReference>
<dbReference type="PANTHER" id="PTHR34108:SF1">
    <property type="entry name" value="SEPTUM SITE-DETERMINING PROTEIN MINC"/>
    <property type="match status" value="1"/>
</dbReference>
<dbReference type="Pfam" id="PF03775">
    <property type="entry name" value="MinC_C"/>
    <property type="match status" value="1"/>
</dbReference>
<dbReference type="Pfam" id="PF05209">
    <property type="entry name" value="MinC_N"/>
    <property type="match status" value="1"/>
</dbReference>
<dbReference type="SUPFAM" id="SSF63848">
    <property type="entry name" value="Cell-division inhibitor MinC, C-terminal domain"/>
    <property type="match status" value="1"/>
</dbReference>
<comment type="function">
    <text evidence="1">Cell division inhibitor that blocks the formation of polar Z ring septums. Rapidly oscillates between the poles of the cell to destabilize FtsZ filaments that have formed before they mature into polar Z rings. Prevents FtsZ polymerization.</text>
</comment>
<comment type="subunit">
    <text evidence="1">Interacts with MinD and FtsZ.</text>
</comment>
<comment type="similarity">
    <text evidence="1">Belongs to the MinC family.</text>
</comment>
<feature type="chain" id="PRO_0000189063" description="Septum site-determining protein MinC">
    <location>
        <begin position="1"/>
        <end position="231"/>
    </location>
</feature>
<accession>Q7UCU1</accession>
<accession>Q83RQ8</accession>